<feature type="chain" id="PRO_0000240018" description="NAD(P)H-quinone oxidoreductase subunit 1, chloroplastic">
    <location>
        <begin position="1"/>
        <end position="363"/>
    </location>
</feature>
<feature type="transmembrane region" description="Helical" evidence="1">
    <location>
        <begin position="28"/>
        <end position="48"/>
    </location>
</feature>
<feature type="transmembrane region" description="Helical" evidence="1">
    <location>
        <begin position="98"/>
        <end position="118"/>
    </location>
</feature>
<feature type="transmembrane region" description="Helical" evidence="1">
    <location>
        <begin position="127"/>
        <end position="147"/>
    </location>
</feature>
<feature type="transmembrane region" description="Helical" evidence="1">
    <location>
        <begin position="248"/>
        <end position="268"/>
    </location>
</feature>
<feature type="transmembrane region" description="Helical" evidence="1">
    <location>
        <begin position="300"/>
        <end position="320"/>
    </location>
</feature>
<feature type="transmembrane region" description="Helical" evidence="1">
    <location>
        <begin position="343"/>
        <end position="363"/>
    </location>
</feature>
<comment type="function">
    <text evidence="1">NDH shuttles electrons from NAD(P)H:plastoquinone, via FMN and iron-sulfur (Fe-S) centers, to quinones in the photosynthetic chain and possibly in a chloroplast respiratory chain. The immediate electron acceptor for the enzyme in this species is believed to be plastoquinone. Couples the redox reaction to proton translocation, and thus conserves the redox energy in a proton gradient.</text>
</comment>
<comment type="catalytic activity">
    <reaction evidence="1">
        <text>a plastoquinone + NADH + (n+1) H(+)(in) = a plastoquinol + NAD(+) + n H(+)(out)</text>
        <dbReference type="Rhea" id="RHEA:42608"/>
        <dbReference type="Rhea" id="RHEA-COMP:9561"/>
        <dbReference type="Rhea" id="RHEA-COMP:9562"/>
        <dbReference type="ChEBI" id="CHEBI:15378"/>
        <dbReference type="ChEBI" id="CHEBI:17757"/>
        <dbReference type="ChEBI" id="CHEBI:57540"/>
        <dbReference type="ChEBI" id="CHEBI:57945"/>
        <dbReference type="ChEBI" id="CHEBI:62192"/>
    </reaction>
</comment>
<comment type="catalytic activity">
    <reaction evidence="1">
        <text>a plastoquinone + NADPH + (n+1) H(+)(in) = a plastoquinol + NADP(+) + n H(+)(out)</text>
        <dbReference type="Rhea" id="RHEA:42612"/>
        <dbReference type="Rhea" id="RHEA-COMP:9561"/>
        <dbReference type="Rhea" id="RHEA-COMP:9562"/>
        <dbReference type="ChEBI" id="CHEBI:15378"/>
        <dbReference type="ChEBI" id="CHEBI:17757"/>
        <dbReference type="ChEBI" id="CHEBI:57783"/>
        <dbReference type="ChEBI" id="CHEBI:58349"/>
        <dbReference type="ChEBI" id="CHEBI:62192"/>
    </reaction>
</comment>
<comment type="subunit">
    <text evidence="1">NDH is composed of at least 16 different subunits, 5 of which are encoded in the nucleus.</text>
</comment>
<comment type="subcellular location">
    <subcellularLocation>
        <location evidence="1">Plastid</location>
        <location evidence="1">Chloroplast thylakoid membrane</location>
        <topology evidence="1">Multi-pass membrane protein</topology>
    </subcellularLocation>
</comment>
<comment type="similarity">
    <text evidence="1">Belongs to the complex I subunit 1 family.</text>
</comment>
<comment type="sequence caution" evidence="2">
    <conflict type="frameshift">
        <sequence resource="EMBL-CDS" id="CAJ00814"/>
    </conflict>
</comment>
<reference key="1">
    <citation type="journal article" date="2006" name="Plant Cell Rep.">
        <title>Complete sequence and organization of the cucumber (Cucumis sativus L. cv. Baekmibaekdadagi) chloroplast genome.</title>
        <authorList>
            <person name="Kim J.-S."/>
            <person name="Jung J.D."/>
            <person name="Lee J.-A."/>
            <person name="Park H.-W."/>
            <person name="Oh K.-H."/>
            <person name="Jeong W.J."/>
            <person name="Choi D.-W."/>
            <person name="Liu J.R."/>
            <person name="Cho K.Y."/>
        </authorList>
    </citation>
    <scope>NUCLEOTIDE SEQUENCE [LARGE SCALE GENOMIC DNA]</scope>
    <source>
        <strain>cv. Baekmibaekdadagi</strain>
    </source>
</reference>
<reference key="2">
    <citation type="journal article" date="2007" name="Cell. Mol. Biol. Lett.">
        <title>The complete structure of the cucumber (Cucumis sativus L.) chloroplast genome: its composition and comparative analysis.</title>
        <authorList>
            <person name="Plader W.W."/>
            <person name="Yukawa Y."/>
            <person name="Sugiura M."/>
            <person name="Malepszy S."/>
        </authorList>
    </citation>
    <scope>NUCLEOTIDE SEQUENCE [LARGE SCALE GENOMIC DNA]</scope>
    <source>
        <strain>cv. Borszczagowski</strain>
    </source>
</reference>
<reference key="3">
    <citation type="journal article" date="2007" name="Genome">
        <title>Sequencing cucumber (Cucumis sativus L.) chloroplast genomes identifies differences between chilling-tolerant and -susceptible cucumber lines.</title>
        <authorList>
            <person name="Chung S.-M."/>
            <person name="Gordon V.S."/>
            <person name="Staub J.E."/>
        </authorList>
    </citation>
    <scope>NUCLEOTIDE SEQUENCE [LARGE SCALE GENOMIC DNA]</scope>
    <source>
        <strain>cv. Chipper</strain>
        <strain>cv. Gy14</strain>
    </source>
</reference>
<gene>
    <name evidence="1" type="primary">ndhA</name>
    <name type="ordered locus">CsCp110</name>
</gene>
<evidence type="ECO:0000255" key="1">
    <source>
        <dbReference type="HAMAP-Rule" id="MF_01350"/>
    </source>
</evidence>
<evidence type="ECO:0000305" key="2"/>
<proteinExistence type="inferred from homology"/>
<organism>
    <name type="scientific">Cucumis sativus</name>
    <name type="common">Cucumber</name>
    <dbReference type="NCBI Taxonomy" id="3659"/>
    <lineage>
        <taxon>Eukaryota</taxon>
        <taxon>Viridiplantae</taxon>
        <taxon>Streptophyta</taxon>
        <taxon>Embryophyta</taxon>
        <taxon>Tracheophyta</taxon>
        <taxon>Spermatophyta</taxon>
        <taxon>Magnoliopsida</taxon>
        <taxon>eudicotyledons</taxon>
        <taxon>Gunneridae</taxon>
        <taxon>Pentapetalae</taxon>
        <taxon>rosids</taxon>
        <taxon>fabids</taxon>
        <taxon>Cucurbitales</taxon>
        <taxon>Cucurbitaceae</taxon>
        <taxon>Benincaseae</taxon>
        <taxon>Cucumis</taxon>
    </lineage>
</organism>
<geneLocation type="chloroplast"/>
<dbReference type="EC" id="7.1.1.-" evidence="1"/>
<dbReference type="EMBL" id="DQ119058">
    <property type="protein sequence ID" value="AAZ94703.1"/>
    <property type="molecule type" value="Genomic_DNA"/>
</dbReference>
<dbReference type="EMBL" id="AJ970307">
    <property type="protein sequence ID" value="CAJ00814.1"/>
    <property type="status" value="ALT_FRAME"/>
    <property type="molecule type" value="Genomic_DNA"/>
</dbReference>
<dbReference type="EMBL" id="DQ865975">
    <property type="protein sequence ID" value="ABI97468.1"/>
    <property type="molecule type" value="Genomic_DNA"/>
</dbReference>
<dbReference type="EMBL" id="DQ865976">
    <property type="protein sequence ID" value="ABI98799.1"/>
    <property type="molecule type" value="Genomic_DNA"/>
</dbReference>
<dbReference type="RefSeq" id="YP_247655.1">
    <property type="nucleotide sequence ID" value="NC_007144.1"/>
</dbReference>
<dbReference type="SMR" id="Q2QD36"/>
<dbReference type="GeneID" id="3429252"/>
<dbReference type="KEGG" id="csv:3429252"/>
<dbReference type="eggNOG" id="KOG4770">
    <property type="taxonomic scope" value="Eukaryota"/>
</dbReference>
<dbReference type="OrthoDB" id="531329at2759"/>
<dbReference type="GO" id="GO:0009535">
    <property type="term" value="C:chloroplast thylakoid membrane"/>
    <property type="evidence" value="ECO:0007669"/>
    <property type="project" value="UniProtKB-SubCell"/>
</dbReference>
<dbReference type="GO" id="GO:0016655">
    <property type="term" value="F:oxidoreductase activity, acting on NAD(P)H, quinone or similar compound as acceptor"/>
    <property type="evidence" value="ECO:0007669"/>
    <property type="project" value="UniProtKB-UniRule"/>
</dbReference>
<dbReference type="GO" id="GO:0048038">
    <property type="term" value="F:quinone binding"/>
    <property type="evidence" value="ECO:0007669"/>
    <property type="project" value="UniProtKB-KW"/>
</dbReference>
<dbReference type="GO" id="GO:0019684">
    <property type="term" value="P:photosynthesis, light reaction"/>
    <property type="evidence" value="ECO:0007669"/>
    <property type="project" value="UniProtKB-UniRule"/>
</dbReference>
<dbReference type="HAMAP" id="MF_01350">
    <property type="entry name" value="NDH1_NuoH"/>
    <property type="match status" value="1"/>
</dbReference>
<dbReference type="InterPro" id="IPR001694">
    <property type="entry name" value="NADH_UbQ_OxRdtase_su1/FPO"/>
</dbReference>
<dbReference type="InterPro" id="IPR018086">
    <property type="entry name" value="NADH_UbQ_OxRdtase_su1_CS"/>
</dbReference>
<dbReference type="NCBIfam" id="NF004741">
    <property type="entry name" value="PRK06076.1-2"/>
    <property type="match status" value="1"/>
</dbReference>
<dbReference type="PANTHER" id="PTHR11432">
    <property type="entry name" value="NADH DEHYDROGENASE SUBUNIT 1"/>
    <property type="match status" value="1"/>
</dbReference>
<dbReference type="PANTHER" id="PTHR11432:SF3">
    <property type="entry name" value="NADH-UBIQUINONE OXIDOREDUCTASE CHAIN 1"/>
    <property type="match status" value="1"/>
</dbReference>
<dbReference type="Pfam" id="PF00146">
    <property type="entry name" value="NADHdh"/>
    <property type="match status" value="1"/>
</dbReference>
<dbReference type="PROSITE" id="PS00667">
    <property type="entry name" value="COMPLEX1_ND1_1"/>
    <property type="match status" value="1"/>
</dbReference>
<dbReference type="PROSITE" id="PS00668">
    <property type="entry name" value="COMPLEX1_ND1_2"/>
    <property type="match status" value="1"/>
</dbReference>
<keyword id="KW-0150">Chloroplast</keyword>
<keyword id="KW-0472">Membrane</keyword>
<keyword id="KW-0520">NAD</keyword>
<keyword id="KW-0521">NADP</keyword>
<keyword id="KW-0934">Plastid</keyword>
<keyword id="KW-0618">Plastoquinone</keyword>
<keyword id="KW-0874">Quinone</keyword>
<keyword id="KW-0793">Thylakoid</keyword>
<keyword id="KW-1278">Translocase</keyword>
<keyword id="KW-0812">Transmembrane</keyword>
<keyword id="KW-1133">Transmembrane helix</keyword>
<accession>Q2QD36</accession>
<accession>A5J1Y8</accession>
<accession>Q4VZL3</accession>
<name>NU1C_CUCSA</name>
<protein>
    <recommendedName>
        <fullName evidence="1">NAD(P)H-quinone oxidoreductase subunit 1, chloroplastic</fullName>
        <ecNumber evidence="1">7.1.1.-</ecNumber>
    </recommendedName>
    <alternativeName>
        <fullName evidence="1">NAD(P)H dehydrogenase subunit 1</fullName>
        <shortName evidence="1">NDH subunit 1</shortName>
    </alternativeName>
    <alternativeName>
        <fullName evidence="1">NADH-plastoquinone oxidoreductase subunit 1</fullName>
    </alternativeName>
</protein>
<sequence length="363" mass="40467">MIIDTSQVQDIHSFSRLEFLKEFYGILWVLVPILTTVLGITIGVLVIVWLEREISAGIQQRIGPEYAGPLGVLQALADGTKLLFKENLLPSRGDTRLFSIGPSIAVISILLSYSVIPFGYRLVLADLPIGVFLWIAISSVAPIGLLMSGYGSNNKYSFLGGLRAAAQSISYEIPLTLCVLSISLLSNSSSTVDIVEAQSKYGFWGWNLWRQPIGFVIFLISSLAECERLPFDLPEAEEELVAGYQTEYSGIKFGLFYVASYLNLLVSSLFVTVLYLGGWDISIPYILGYELFEINKVYEVFGMTISIFITLAKTYLFLFISIATRWTLPRLRIDQLLNLGWKFLLPISLGNLLLTTSFQLFSL</sequence>